<accession>Q47IC7</accession>
<sequence>MSPDQLVVEFDRALRTILAPARSMRPLPGAALPDAELPAAQRSHVAGLMRVNHCGEICAQALYQGQALTSRDPTIRDALRSAADEETEHLAWTERRISELGGRKSFLNPLWYLGSLSLGLVAGALGDKWSLGFLAETERQVEAHLNGHLRSLPEDDSRSRAIVDQMRLDEIQHAETAVRYGAAELPSPAKVAMKVMAKVMTGVAYRF</sequence>
<evidence type="ECO:0000255" key="1">
    <source>
        <dbReference type="HAMAP-Rule" id="MF_01658"/>
    </source>
</evidence>
<protein>
    <recommendedName>
        <fullName evidence="1">3-demethoxyubiquinol 3-hydroxylase</fullName>
        <shortName evidence="1">DMQ hydroxylase</shortName>
        <ecNumber evidence="1">1.14.99.60</ecNumber>
    </recommendedName>
    <alternativeName>
        <fullName evidence="1">2-nonaprenyl-3-methyl-6-methoxy-1,4-benzoquinol hydroxylase</fullName>
    </alternativeName>
</protein>
<dbReference type="EC" id="1.14.99.60" evidence="1"/>
<dbReference type="EMBL" id="CP000089">
    <property type="protein sequence ID" value="AAZ45404.1"/>
    <property type="molecule type" value="Genomic_DNA"/>
</dbReference>
<dbReference type="SMR" id="Q47IC7"/>
<dbReference type="STRING" id="159087.Daro_0647"/>
<dbReference type="KEGG" id="dar:Daro_0647"/>
<dbReference type="eggNOG" id="COG2941">
    <property type="taxonomic scope" value="Bacteria"/>
</dbReference>
<dbReference type="HOGENOM" id="CLU_088601_0_0_4"/>
<dbReference type="OrthoDB" id="5192789at2"/>
<dbReference type="UniPathway" id="UPA00232"/>
<dbReference type="GO" id="GO:0005886">
    <property type="term" value="C:plasma membrane"/>
    <property type="evidence" value="ECO:0007669"/>
    <property type="project" value="UniProtKB-SubCell"/>
</dbReference>
<dbReference type="GO" id="GO:0008682">
    <property type="term" value="F:3-demethoxyubiquinol 3-hydroxylase activity"/>
    <property type="evidence" value="ECO:0007669"/>
    <property type="project" value="UniProtKB-EC"/>
</dbReference>
<dbReference type="GO" id="GO:0046872">
    <property type="term" value="F:metal ion binding"/>
    <property type="evidence" value="ECO:0007669"/>
    <property type="project" value="UniProtKB-KW"/>
</dbReference>
<dbReference type="GO" id="GO:0006744">
    <property type="term" value="P:ubiquinone biosynthetic process"/>
    <property type="evidence" value="ECO:0007669"/>
    <property type="project" value="UniProtKB-UniRule"/>
</dbReference>
<dbReference type="CDD" id="cd01042">
    <property type="entry name" value="DMQH"/>
    <property type="match status" value="1"/>
</dbReference>
<dbReference type="Gene3D" id="1.20.1260.10">
    <property type="match status" value="1"/>
</dbReference>
<dbReference type="HAMAP" id="MF_01658">
    <property type="entry name" value="COQ7"/>
    <property type="match status" value="1"/>
</dbReference>
<dbReference type="InterPro" id="IPR047809">
    <property type="entry name" value="COQ7_proteobact"/>
</dbReference>
<dbReference type="InterPro" id="IPR012347">
    <property type="entry name" value="Ferritin-like"/>
</dbReference>
<dbReference type="InterPro" id="IPR009078">
    <property type="entry name" value="Ferritin-like_SF"/>
</dbReference>
<dbReference type="InterPro" id="IPR011566">
    <property type="entry name" value="Ubq_synth_Coq7"/>
</dbReference>
<dbReference type="NCBIfam" id="NF033656">
    <property type="entry name" value="DMQ_monoox_COQ7"/>
    <property type="match status" value="1"/>
</dbReference>
<dbReference type="PANTHER" id="PTHR11237:SF4">
    <property type="entry name" value="5-DEMETHOXYUBIQUINONE HYDROXYLASE, MITOCHONDRIAL"/>
    <property type="match status" value="1"/>
</dbReference>
<dbReference type="PANTHER" id="PTHR11237">
    <property type="entry name" value="COENZYME Q10 BIOSYNTHESIS PROTEIN 7"/>
    <property type="match status" value="1"/>
</dbReference>
<dbReference type="Pfam" id="PF03232">
    <property type="entry name" value="COQ7"/>
    <property type="match status" value="1"/>
</dbReference>
<dbReference type="SUPFAM" id="SSF47240">
    <property type="entry name" value="Ferritin-like"/>
    <property type="match status" value="1"/>
</dbReference>
<organism>
    <name type="scientific">Dechloromonas aromatica (strain RCB)</name>
    <dbReference type="NCBI Taxonomy" id="159087"/>
    <lineage>
        <taxon>Bacteria</taxon>
        <taxon>Pseudomonadati</taxon>
        <taxon>Pseudomonadota</taxon>
        <taxon>Betaproteobacteria</taxon>
        <taxon>Rhodocyclales</taxon>
        <taxon>Azonexaceae</taxon>
        <taxon>Dechloromonas</taxon>
    </lineage>
</organism>
<reference key="1">
    <citation type="journal article" date="2009" name="BMC Genomics">
        <title>Metabolic analysis of the soil microbe Dechloromonas aromatica str. RCB: indications of a surprisingly complex life-style and cryptic anaerobic pathways for aromatic degradation.</title>
        <authorList>
            <person name="Salinero K.K."/>
            <person name="Keller K."/>
            <person name="Feil W.S."/>
            <person name="Feil H."/>
            <person name="Trong S."/>
            <person name="Di Bartolo G."/>
            <person name="Lapidus A."/>
        </authorList>
    </citation>
    <scope>NUCLEOTIDE SEQUENCE [LARGE SCALE GENOMIC DNA]</scope>
    <source>
        <strain>RCB</strain>
    </source>
</reference>
<keyword id="KW-1003">Cell membrane</keyword>
<keyword id="KW-0408">Iron</keyword>
<keyword id="KW-0472">Membrane</keyword>
<keyword id="KW-0479">Metal-binding</keyword>
<keyword id="KW-0503">Monooxygenase</keyword>
<keyword id="KW-0560">Oxidoreductase</keyword>
<keyword id="KW-0831">Ubiquinone biosynthesis</keyword>
<gene>
    <name evidence="1" type="primary">coq7</name>
    <name type="ordered locus">Daro_0647</name>
</gene>
<name>COQ7_DECAR</name>
<comment type="function">
    <text evidence="1">Catalyzes the hydroxylation of 2-nonaprenyl-3-methyl-6-methoxy-1,4-benzoquinol during ubiquinone biosynthesis.</text>
</comment>
<comment type="catalytic activity">
    <reaction evidence="1">
        <text>a 5-methoxy-2-methyl-3-(all-trans-polyprenyl)benzene-1,4-diol + AH2 + O2 = a 3-demethylubiquinol + A + H2O</text>
        <dbReference type="Rhea" id="RHEA:50908"/>
        <dbReference type="Rhea" id="RHEA-COMP:10859"/>
        <dbReference type="Rhea" id="RHEA-COMP:10914"/>
        <dbReference type="ChEBI" id="CHEBI:13193"/>
        <dbReference type="ChEBI" id="CHEBI:15377"/>
        <dbReference type="ChEBI" id="CHEBI:15379"/>
        <dbReference type="ChEBI" id="CHEBI:17499"/>
        <dbReference type="ChEBI" id="CHEBI:84167"/>
        <dbReference type="ChEBI" id="CHEBI:84422"/>
        <dbReference type="EC" id="1.14.99.60"/>
    </reaction>
</comment>
<comment type="cofactor">
    <cofactor evidence="1">
        <name>Fe cation</name>
        <dbReference type="ChEBI" id="CHEBI:24875"/>
    </cofactor>
    <text evidence="1">Binds 2 iron ions per subunit.</text>
</comment>
<comment type="pathway">
    <text evidence="1">Cofactor biosynthesis; ubiquinone biosynthesis.</text>
</comment>
<comment type="subcellular location">
    <subcellularLocation>
        <location evidence="1">Cell membrane</location>
        <topology evidence="1">Peripheral membrane protein</topology>
    </subcellularLocation>
</comment>
<comment type="similarity">
    <text evidence="1">Belongs to the COQ7 family.</text>
</comment>
<feature type="chain" id="PRO_0000338683" description="3-demethoxyubiquinol 3-hydroxylase">
    <location>
        <begin position="1"/>
        <end position="207"/>
    </location>
</feature>
<feature type="binding site" evidence="1">
    <location>
        <position position="56"/>
    </location>
    <ligand>
        <name>Fe cation</name>
        <dbReference type="ChEBI" id="CHEBI:24875"/>
        <label>1</label>
    </ligand>
</feature>
<feature type="binding site" evidence="1">
    <location>
        <position position="86"/>
    </location>
    <ligand>
        <name>Fe cation</name>
        <dbReference type="ChEBI" id="CHEBI:24875"/>
        <label>1</label>
    </ligand>
</feature>
<feature type="binding site" evidence="1">
    <location>
        <position position="86"/>
    </location>
    <ligand>
        <name>Fe cation</name>
        <dbReference type="ChEBI" id="CHEBI:24875"/>
        <label>2</label>
    </ligand>
</feature>
<feature type="binding site" evidence="1">
    <location>
        <position position="89"/>
    </location>
    <ligand>
        <name>Fe cation</name>
        <dbReference type="ChEBI" id="CHEBI:24875"/>
        <label>1</label>
    </ligand>
</feature>
<feature type="binding site" evidence="1">
    <location>
        <position position="138"/>
    </location>
    <ligand>
        <name>Fe cation</name>
        <dbReference type="ChEBI" id="CHEBI:24875"/>
        <label>2</label>
    </ligand>
</feature>
<feature type="binding site" evidence="1">
    <location>
        <position position="170"/>
    </location>
    <ligand>
        <name>Fe cation</name>
        <dbReference type="ChEBI" id="CHEBI:24875"/>
        <label>1</label>
    </ligand>
</feature>
<feature type="binding site" evidence="1">
    <location>
        <position position="170"/>
    </location>
    <ligand>
        <name>Fe cation</name>
        <dbReference type="ChEBI" id="CHEBI:24875"/>
        <label>2</label>
    </ligand>
</feature>
<feature type="binding site" evidence="1">
    <location>
        <position position="173"/>
    </location>
    <ligand>
        <name>Fe cation</name>
        <dbReference type="ChEBI" id="CHEBI:24875"/>
        <label>2</label>
    </ligand>
</feature>
<proteinExistence type="inferred from homology"/>